<evidence type="ECO:0000255" key="1">
    <source>
        <dbReference type="HAMAP-Rule" id="MF_00298"/>
    </source>
</evidence>
<proteinExistence type="inferred from homology"/>
<feature type="chain" id="PRO_1000191846" description="RNA pyrophosphohydrolase">
    <location>
        <begin position="1"/>
        <end position="176"/>
    </location>
</feature>
<feature type="domain" description="Nudix hydrolase" evidence="1">
    <location>
        <begin position="6"/>
        <end position="149"/>
    </location>
</feature>
<feature type="short sequence motif" description="Nudix box">
    <location>
        <begin position="38"/>
        <end position="59"/>
    </location>
</feature>
<reference key="1">
    <citation type="journal article" date="2009" name="PLoS Genet.">
        <title>The complete genome and proteome of Laribacter hongkongensis reveal potential mechanisms for adaptations to different temperatures and habitats.</title>
        <authorList>
            <person name="Woo P.C.Y."/>
            <person name="Lau S.K.P."/>
            <person name="Tse H."/>
            <person name="Teng J.L.L."/>
            <person name="Curreem S.O."/>
            <person name="Tsang A.K.L."/>
            <person name="Fan R.Y.Y."/>
            <person name="Wong G.K.M."/>
            <person name="Huang Y."/>
            <person name="Loman N.J."/>
            <person name="Snyder L.A.S."/>
            <person name="Cai J.J."/>
            <person name="Huang J.-D."/>
            <person name="Mak W."/>
            <person name="Pallen M.J."/>
            <person name="Lok S."/>
            <person name="Yuen K.-Y."/>
        </authorList>
    </citation>
    <scope>NUCLEOTIDE SEQUENCE [LARGE SCALE GENOMIC DNA]</scope>
    <source>
        <strain>HLHK9</strain>
    </source>
</reference>
<keyword id="KW-0378">Hydrolase</keyword>
<keyword id="KW-1185">Reference proteome</keyword>
<comment type="function">
    <text evidence="1">Accelerates the degradation of transcripts by removing pyrophosphate from the 5'-end of triphosphorylated RNA, leading to a more labile monophosphorylated state that can stimulate subsequent ribonuclease cleavage.</text>
</comment>
<comment type="cofactor">
    <cofactor evidence="1">
        <name>a divalent metal cation</name>
        <dbReference type="ChEBI" id="CHEBI:60240"/>
    </cofactor>
</comment>
<comment type="similarity">
    <text evidence="1">Belongs to the Nudix hydrolase family. RppH subfamily.</text>
</comment>
<protein>
    <recommendedName>
        <fullName evidence="1">RNA pyrophosphohydrolase</fullName>
        <ecNumber evidence="1">3.6.1.-</ecNumber>
    </recommendedName>
    <alternativeName>
        <fullName evidence="1">(Di)nucleoside polyphosphate hydrolase</fullName>
    </alternativeName>
</protein>
<name>RPPH_LARHH</name>
<gene>
    <name evidence="1" type="primary">rppH</name>
    <name evidence="1" type="synonym">nudH</name>
    <name type="ordered locus">LHK_00604</name>
</gene>
<sequence length="176" mass="20806">MLDRDGYRPNVGIIICNTRNQVFWGKRVREHSWQFPQGGIKPGESPEAAMYRELMEEVGLSPHHVKIIGRTRDWLRYDVPTHWVRREWRGSYRGQKQIWFLLRLTGRDSDVCLRATHHPEFDGWRWSDYWSPIEHVIDFKRNVYEMALTELSRYLRGLESRQASDAGAVQPDGAPL</sequence>
<accession>C1DCW2</accession>
<organism>
    <name type="scientific">Laribacter hongkongensis (strain HLHK9)</name>
    <dbReference type="NCBI Taxonomy" id="557598"/>
    <lineage>
        <taxon>Bacteria</taxon>
        <taxon>Pseudomonadati</taxon>
        <taxon>Pseudomonadota</taxon>
        <taxon>Betaproteobacteria</taxon>
        <taxon>Neisseriales</taxon>
        <taxon>Aquaspirillaceae</taxon>
        <taxon>Laribacter</taxon>
    </lineage>
</organism>
<dbReference type="EC" id="3.6.1.-" evidence="1"/>
<dbReference type="EMBL" id="CP001154">
    <property type="protein sequence ID" value="ACO73597.1"/>
    <property type="molecule type" value="Genomic_DNA"/>
</dbReference>
<dbReference type="RefSeq" id="WP_012696089.1">
    <property type="nucleotide sequence ID" value="NC_012559.1"/>
</dbReference>
<dbReference type="SMR" id="C1DCW2"/>
<dbReference type="STRING" id="557598.LHK_00604"/>
<dbReference type="KEGG" id="lhk:LHK_00604"/>
<dbReference type="eggNOG" id="COG0494">
    <property type="taxonomic scope" value="Bacteria"/>
</dbReference>
<dbReference type="HOGENOM" id="CLU_087195_3_1_4"/>
<dbReference type="Proteomes" id="UP000002010">
    <property type="component" value="Chromosome"/>
</dbReference>
<dbReference type="GO" id="GO:0016462">
    <property type="term" value="F:pyrophosphatase activity"/>
    <property type="evidence" value="ECO:0007669"/>
    <property type="project" value="UniProtKB-ARBA"/>
</dbReference>
<dbReference type="CDD" id="cd03671">
    <property type="entry name" value="NUDIX_Ap4A_hydrolase_plant_like"/>
    <property type="match status" value="1"/>
</dbReference>
<dbReference type="FunFam" id="3.90.79.10:FF:000001">
    <property type="entry name" value="RNA pyrophosphohydrolase"/>
    <property type="match status" value="1"/>
</dbReference>
<dbReference type="Gene3D" id="3.90.79.10">
    <property type="entry name" value="Nucleoside Triphosphate Pyrophosphohydrolase"/>
    <property type="match status" value="1"/>
</dbReference>
<dbReference type="HAMAP" id="MF_00298">
    <property type="entry name" value="Nudix_RppH"/>
    <property type="match status" value="1"/>
</dbReference>
<dbReference type="InterPro" id="IPR020476">
    <property type="entry name" value="Nudix_hydrolase"/>
</dbReference>
<dbReference type="InterPro" id="IPR015797">
    <property type="entry name" value="NUDIX_hydrolase-like_dom_sf"/>
</dbReference>
<dbReference type="InterPro" id="IPR020084">
    <property type="entry name" value="NUDIX_hydrolase_CS"/>
</dbReference>
<dbReference type="InterPro" id="IPR000086">
    <property type="entry name" value="NUDIX_hydrolase_dom"/>
</dbReference>
<dbReference type="InterPro" id="IPR022927">
    <property type="entry name" value="RppH"/>
</dbReference>
<dbReference type="NCBIfam" id="NF001935">
    <property type="entry name" value="PRK00714.1-2"/>
    <property type="match status" value="1"/>
</dbReference>
<dbReference type="NCBIfam" id="NF001937">
    <property type="entry name" value="PRK00714.1-4"/>
    <property type="match status" value="1"/>
</dbReference>
<dbReference type="NCBIfam" id="NF001938">
    <property type="entry name" value="PRK00714.1-5"/>
    <property type="match status" value="1"/>
</dbReference>
<dbReference type="PANTHER" id="PTHR43736">
    <property type="entry name" value="ADP-RIBOSE PYROPHOSPHATASE"/>
    <property type="match status" value="1"/>
</dbReference>
<dbReference type="PANTHER" id="PTHR43736:SF1">
    <property type="entry name" value="DIHYDRONEOPTERIN TRIPHOSPHATE DIPHOSPHATASE"/>
    <property type="match status" value="1"/>
</dbReference>
<dbReference type="Pfam" id="PF00293">
    <property type="entry name" value="NUDIX"/>
    <property type="match status" value="1"/>
</dbReference>
<dbReference type="PRINTS" id="PR00502">
    <property type="entry name" value="NUDIXFAMILY"/>
</dbReference>
<dbReference type="SUPFAM" id="SSF55811">
    <property type="entry name" value="Nudix"/>
    <property type="match status" value="1"/>
</dbReference>
<dbReference type="PROSITE" id="PS51462">
    <property type="entry name" value="NUDIX"/>
    <property type="match status" value="1"/>
</dbReference>
<dbReference type="PROSITE" id="PS00893">
    <property type="entry name" value="NUDIX_BOX"/>
    <property type="match status" value="1"/>
</dbReference>